<feature type="chain" id="PRO_0000073055" description="Ovomucoid">
    <location>
        <begin position="1" status="less than"/>
        <end position="54" status="greater than"/>
    </location>
</feature>
<feature type="domain" description="Kazal-like" evidence="1">
    <location>
        <begin position="4"/>
        <end position="54"/>
    </location>
</feature>
<feature type="site" description="Reactive bond 3">
    <location>
        <begin position="16"/>
        <end position="17"/>
    </location>
</feature>
<feature type="glycosylation site" description="N-linked (GlcNAc...) asparagine">
    <location>
        <position position="43"/>
    </location>
</feature>
<feature type="disulfide bond">
    <location>
        <begin position="6"/>
        <end position="36"/>
    </location>
</feature>
<feature type="disulfide bond">
    <location>
        <begin position="14"/>
        <end position="33"/>
    </location>
</feature>
<feature type="disulfide bond">
    <location>
        <begin position="22"/>
        <end position="54"/>
    </location>
</feature>
<feature type="non-terminal residue">
    <location>
        <position position="1"/>
    </location>
</feature>
<feature type="non-terminal residue">
    <location>
        <position position="54"/>
    </location>
</feature>
<accession>P68149</accession>
<accession>P05576</accession>
<reference key="1">
    <citation type="journal article" date="1987" name="Biochemistry">
        <title>Ovomucoid third domains from 100 avian species: isolation, sequences, and hypervariability of enzyme-inhibitor contact residues.</title>
        <authorList>
            <person name="Laskowski M. Jr."/>
            <person name="Kato I."/>
            <person name="Ardelt W."/>
            <person name="Cook J."/>
            <person name="Denton A."/>
            <person name="Empie M.W."/>
            <person name="Kohr W.J."/>
            <person name="Park S.J."/>
            <person name="Parks K."/>
            <person name="Schatzley B.L."/>
            <person name="Schoenberger O.L."/>
            <person name="Tashiro M."/>
            <person name="Vichot G."/>
            <person name="Whatley H.E."/>
            <person name="Wieczorek A."/>
            <person name="Wieczorek M."/>
        </authorList>
    </citation>
    <scope>PROTEIN SEQUENCE</scope>
</reference>
<organism>
    <name type="scientific">Anas capensis</name>
    <name type="common">Cape teal</name>
    <name type="synonym">African Cape teal</name>
    <dbReference type="NCBI Taxonomy" id="8837"/>
    <lineage>
        <taxon>Eukaryota</taxon>
        <taxon>Metazoa</taxon>
        <taxon>Chordata</taxon>
        <taxon>Craniata</taxon>
        <taxon>Vertebrata</taxon>
        <taxon>Euteleostomi</taxon>
        <taxon>Archelosauria</taxon>
        <taxon>Archosauria</taxon>
        <taxon>Dinosauria</taxon>
        <taxon>Saurischia</taxon>
        <taxon>Theropoda</taxon>
        <taxon>Coelurosauria</taxon>
        <taxon>Aves</taxon>
        <taxon>Neognathae</taxon>
        <taxon>Galloanserae</taxon>
        <taxon>Anseriformes</taxon>
        <taxon>Anatidae</taxon>
        <taxon>Anatinae</taxon>
        <taxon>Anas</taxon>
    </lineage>
</organism>
<protein>
    <recommendedName>
        <fullName>Ovomucoid</fullName>
    </recommendedName>
</protein>
<proteinExistence type="evidence at protein level"/>
<keyword id="KW-0903">Direct protein sequencing</keyword>
<keyword id="KW-1015">Disulfide bond</keyword>
<keyword id="KW-0325">Glycoprotein</keyword>
<keyword id="KW-0646">Protease inhibitor</keyword>
<keyword id="KW-0677">Repeat</keyword>
<keyword id="KW-0964">Secreted</keyword>
<keyword id="KW-0722">Serine protease inhibitor</keyword>
<dbReference type="PIR" id="G31437">
    <property type="entry name" value="G31437"/>
</dbReference>
<dbReference type="SMR" id="P68149"/>
<dbReference type="GO" id="GO:0005576">
    <property type="term" value="C:extracellular region"/>
    <property type="evidence" value="ECO:0007669"/>
    <property type="project" value="UniProtKB-SubCell"/>
</dbReference>
<dbReference type="GO" id="GO:0004867">
    <property type="term" value="F:serine-type endopeptidase inhibitor activity"/>
    <property type="evidence" value="ECO:0007669"/>
    <property type="project" value="UniProtKB-KW"/>
</dbReference>
<dbReference type="CDD" id="cd00104">
    <property type="entry name" value="KAZAL_FS"/>
    <property type="match status" value="1"/>
</dbReference>
<dbReference type="FunFam" id="3.30.60.30:FF:000037">
    <property type="entry name" value="Ovomucoid"/>
    <property type="match status" value="1"/>
</dbReference>
<dbReference type="Gene3D" id="3.30.60.30">
    <property type="match status" value="1"/>
</dbReference>
<dbReference type="InterPro" id="IPR051597">
    <property type="entry name" value="Bifunctional_prot_inhibitor"/>
</dbReference>
<dbReference type="InterPro" id="IPR002350">
    <property type="entry name" value="Kazal_dom"/>
</dbReference>
<dbReference type="InterPro" id="IPR036058">
    <property type="entry name" value="Kazal_dom_sf"/>
</dbReference>
<dbReference type="InterPro" id="IPR001239">
    <property type="entry name" value="Prot_inh_Kazal-m"/>
</dbReference>
<dbReference type="PANTHER" id="PTHR47729:SF1">
    <property type="entry name" value="OVOMUCOID-LIKE-RELATED"/>
    <property type="match status" value="1"/>
</dbReference>
<dbReference type="PANTHER" id="PTHR47729">
    <property type="entry name" value="SERINE PEPTIDASE INHIBITOR, KAZAL TYPE 2, TANDEM DUPLICATE 1-RELATED"/>
    <property type="match status" value="1"/>
</dbReference>
<dbReference type="Pfam" id="PF00050">
    <property type="entry name" value="Kazal_1"/>
    <property type="match status" value="1"/>
</dbReference>
<dbReference type="PRINTS" id="PR00290">
    <property type="entry name" value="KAZALINHBTR"/>
</dbReference>
<dbReference type="SMART" id="SM00280">
    <property type="entry name" value="KAZAL"/>
    <property type="match status" value="1"/>
</dbReference>
<dbReference type="SUPFAM" id="SSF100895">
    <property type="entry name" value="Kazal-type serine protease inhibitors"/>
    <property type="match status" value="1"/>
</dbReference>
<dbReference type="PROSITE" id="PS00282">
    <property type="entry name" value="KAZAL_1"/>
    <property type="match status" value="1"/>
</dbReference>
<dbReference type="PROSITE" id="PS51465">
    <property type="entry name" value="KAZAL_2"/>
    <property type="match status" value="1"/>
</dbReference>
<name>IOVO_ANACA</name>
<evidence type="ECO:0000255" key="1">
    <source>
        <dbReference type="PROSITE-ProRule" id="PRU00798"/>
    </source>
</evidence>
<sequence>VATVDCSGYPKPACTMEYMPLCGSDNKTYGNKCNFCNAVVDSNGTLTLSHFGEC</sequence>
<comment type="subcellular location">
    <subcellularLocation>
        <location>Secreted</location>
    </subcellularLocation>
</comment>
<comment type="domain">
    <text>Avian ovomucoid consists of three homologous, tandem Kazal family inhibitory domains.</text>
</comment>